<protein>
    <recommendedName>
        <fullName evidence="1">Photosystem II reaction center protein J</fullName>
        <shortName evidence="1">PSII-J</shortName>
    </recommendedName>
</protein>
<accession>A2T347</accession>
<organism>
    <name type="scientific">Angiopteris evecta</name>
    <name type="common">Mule's foot fern</name>
    <name type="synonym">Polypodium evectum</name>
    <dbReference type="NCBI Taxonomy" id="13825"/>
    <lineage>
        <taxon>Eukaryota</taxon>
        <taxon>Viridiplantae</taxon>
        <taxon>Streptophyta</taxon>
        <taxon>Embryophyta</taxon>
        <taxon>Tracheophyta</taxon>
        <taxon>Polypodiopsida</taxon>
        <taxon>Marattiidae</taxon>
        <taxon>Marattiales</taxon>
        <taxon>Marattiaceae</taxon>
        <taxon>Angiopteris</taxon>
    </lineage>
</organism>
<comment type="function">
    <text evidence="1">One of the components of the core complex of photosystem II (PSII). PSII is a light-driven water:plastoquinone oxidoreductase that uses light energy to abstract electrons from H(2)O, generating O(2) and a proton gradient subsequently used for ATP formation. It consists of a core antenna complex that captures photons, and an electron transfer chain that converts photonic excitation into a charge separation.</text>
</comment>
<comment type="subunit">
    <text evidence="1">PSII is composed of 1 copy each of membrane proteins PsbA, PsbB, PsbC, PsbD, PsbE, PsbF, PsbH, PsbI, PsbJ, PsbK, PsbL, PsbM, PsbT, PsbX, PsbY, PsbZ, Psb30/Ycf12, at least 3 peripheral proteins of the oxygen-evolving complex and a large number of cofactors. It forms dimeric complexes.</text>
</comment>
<comment type="subcellular location">
    <subcellularLocation>
        <location evidence="1">Plastid</location>
        <location evidence="1">Chloroplast thylakoid membrane</location>
        <topology evidence="1">Single-pass membrane protein</topology>
    </subcellularLocation>
</comment>
<comment type="similarity">
    <text evidence="1">Belongs to the PsbJ family.</text>
</comment>
<keyword id="KW-0150">Chloroplast</keyword>
<keyword id="KW-0472">Membrane</keyword>
<keyword id="KW-0602">Photosynthesis</keyword>
<keyword id="KW-0604">Photosystem II</keyword>
<keyword id="KW-0934">Plastid</keyword>
<keyword id="KW-0674">Reaction center</keyword>
<keyword id="KW-0793">Thylakoid</keyword>
<keyword id="KW-0812">Transmembrane</keyword>
<keyword id="KW-1133">Transmembrane helix</keyword>
<reference key="1">
    <citation type="journal article" date="2007" name="Am. Fern J.">
        <title>The complete plastid genome sequence of Angiopteris evecta (G. Forst.) Hoffm. (Marattiaceae).</title>
        <authorList>
            <person name="Roper J.M."/>
            <person name="Hansen S.K."/>
            <person name="Wolf P.G."/>
            <person name="Karol K.G."/>
            <person name="Mandoli D.F."/>
            <person name="Everett K.D.E."/>
            <person name="Kuehl J.V."/>
            <person name="Boore J.L."/>
        </authorList>
    </citation>
    <scope>NUCLEOTIDE SEQUENCE [LARGE SCALE GENOMIC DNA]</scope>
</reference>
<feature type="chain" id="PRO_0000292246" description="Photosystem II reaction center protein J">
    <location>
        <begin position="1"/>
        <end position="40"/>
    </location>
</feature>
<feature type="transmembrane region" description="Helical" evidence="1">
    <location>
        <begin position="8"/>
        <end position="28"/>
    </location>
</feature>
<evidence type="ECO:0000255" key="1">
    <source>
        <dbReference type="HAMAP-Rule" id="MF_01305"/>
    </source>
</evidence>
<name>PSBJ_ANGEV</name>
<geneLocation type="chloroplast"/>
<proteinExistence type="inferred from homology"/>
<gene>
    <name evidence="1" type="primary">psbJ</name>
</gene>
<dbReference type="EMBL" id="DQ821119">
    <property type="protein sequence ID" value="ABG79614.1"/>
    <property type="molecule type" value="Genomic_DNA"/>
</dbReference>
<dbReference type="RefSeq" id="YP_001023715.1">
    <property type="nucleotide sequence ID" value="NC_008829.1"/>
</dbReference>
<dbReference type="SMR" id="A2T347"/>
<dbReference type="GeneID" id="4788137"/>
<dbReference type="GO" id="GO:0009535">
    <property type="term" value="C:chloroplast thylakoid membrane"/>
    <property type="evidence" value="ECO:0007669"/>
    <property type="project" value="UniProtKB-SubCell"/>
</dbReference>
<dbReference type="GO" id="GO:0009539">
    <property type="term" value="C:photosystem II reaction center"/>
    <property type="evidence" value="ECO:0007669"/>
    <property type="project" value="InterPro"/>
</dbReference>
<dbReference type="GO" id="GO:0015979">
    <property type="term" value="P:photosynthesis"/>
    <property type="evidence" value="ECO:0007669"/>
    <property type="project" value="UniProtKB-UniRule"/>
</dbReference>
<dbReference type="Gene3D" id="6.10.250.2070">
    <property type="match status" value="1"/>
</dbReference>
<dbReference type="HAMAP" id="MF_01305">
    <property type="entry name" value="PSII_PsbJ"/>
    <property type="match status" value="1"/>
</dbReference>
<dbReference type="InterPro" id="IPR002682">
    <property type="entry name" value="PSII_PsbJ"/>
</dbReference>
<dbReference type="InterPro" id="IPR037267">
    <property type="entry name" value="PSII_PsbJ_sf"/>
</dbReference>
<dbReference type="NCBIfam" id="NF002722">
    <property type="entry name" value="PRK02565.1"/>
    <property type="match status" value="1"/>
</dbReference>
<dbReference type="PANTHER" id="PTHR34812">
    <property type="entry name" value="PHOTOSYSTEM II REACTION CENTER PROTEIN J"/>
    <property type="match status" value="1"/>
</dbReference>
<dbReference type="PANTHER" id="PTHR34812:SF3">
    <property type="entry name" value="PHOTOSYSTEM II REACTION CENTER PROTEIN J"/>
    <property type="match status" value="1"/>
</dbReference>
<dbReference type="Pfam" id="PF01788">
    <property type="entry name" value="PsbJ"/>
    <property type="match status" value="1"/>
</dbReference>
<dbReference type="SUPFAM" id="SSF161021">
    <property type="entry name" value="Photosystem II reaction center protein J, PsbJ"/>
    <property type="match status" value="1"/>
</dbReference>
<sequence length="40" mass="4144">MANTTGRIPLWLIGTVTGILVIGLLGIFFYGAYSGLGSSL</sequence>